<proteinExistence type="inferred from homology"/>
<protein>
    <recommendedName>
        <fullName evidence="1">Transcriptional repressor NrdR</fullName>
    </recommendedName>
</protein>
<reference key="1">
    <citation type="journal article" date="2006" name="J. Bacteriol.">
        <title>Comparative genomic evidence for a close relationship between the dimorphic prosthecate bacteria Hyphomonas neptunium and Caulobacter crescentus.</title>
        <authorList>
            <person name="Badger J.H."/>
            <person name="Hoover T.R."/>
            <person name="Brun Y.V."/>
            <person name="Weiner R.M."/>
            <person name="Laub M.T."/>
            <person name="Alexandre G."/>
            <person name="Mrazek J."/>
            <person name="Ren Q."/>
            <person name="Paulsen I.T."/>
            <person name="Nelson K.E."/>
            <person name="Khouri H.M."/>
            <person name="Radune D."/>
            <person name="Sosa J."/>
            <person name="Dodson R.J."/>
            <person name="Sullivan S.A."/>
            <person name="Rosovitz M.J."/>
            <person name="Madupu R."/>
            <person name="Brinkac L.M."/>
            <person name="Durkin A.S."/>
            <person name="Daugherty S.C."/>
            <person name="Kothari S.P."/>
            <person name="Giglio M.G."/>
            <person name="Zhou L."/>
            <person name="Haft D.H."/>
            <person name="Selengut J.D."/>
            <person name="Davidsen T.M."/>
            <person name="Yang Q."/>
            <person name="Zafar N."/>
            <person name="Ward N.L."/>
        </authorList>
    </citation>
    <scope>NUCLEOTIDE SEQUENCE [LARGE SCALE GENOMIC DNA]</scope>
    <source>
        <strain>ATCC 15444</strain>
    </source>
</reference>
<feature type="chain" id="PRO_0000264181" description="Transcriptional repressor NrdR">
    <location>
        <begin position="1"/>
        <end position="159"/>
    </location>
</feature>
<feature type="domain" description="ATP-cone" evidence="1">
    <location>
        <begin position="49"/>
        <end position="139"/>
    </location>
</feature>
<feature type="zinc finger region" evidence="1">
    <location>
        <begin position="3"/>
        <end position="34"/>
    </location>
</feature>
<organism>
    <name type="scientific">Hyphomonas neptunium (strain ATCC 15444)</name>
    <dbReference type="NCBI Taxonomy" id="228405"/>
    <lineage>
        <taxon>Bacteria</taxon>
        <taxon>Pseudomonadati</taxon>
        <taxon>Pseudomonadota</taxon>
        <taxon>Alphaproteobacteria</taxon>
        <taxon>Hyphomonadales</taxon>
        <taxon>Hyphomonadaceae</taxon>
        <taxon>Hyphomonas</taxon>
    </lineage>
</organism>
<keyword id="KW-0067">ATP-binding</keyword>
<keyword id="KW-0238">DNA-binding</keyword>
<keyword id="KW-0479">Metal-binding</keyword>
<keyword id="KW-0547">Nucleotide-binding</keyword>
<keyword id="KW-1185">Reference proteome</keyword>
<keyword id="KW-0678">Repressor</keyword>
<keyword id="KW-0804">Transcription</keyword>
<keyword id="KW-0805">Transcription regulation</keyword>
<keyword id="KW-0862">Zinc</keyword>
<keyword id="KW-0863">Zinc-finger</keyword>
<evidence type="ECO:0000255" key="1">
    <source>
        <dbReference type="HAMAP-Rule" id="MF_00440"/>
    </source>
</evidence>
<gene>
    <name evidence="1" type="primary">nrdR</name>
    <name type="ordered locus">HNE_2059</name>
</gene>
<name>NRDR_HYPNA</name>
<dbReference type="EMBL" id="CP000158">
    <property type="protein sequence ID" value="ABI75663.1"/>
    <property type="molecule type" value="Genomic_DNA"/>
</dbReference>
<dbReference type="RefSeq" id="WP_011647056.1">
    <property type="nucleotide sequence ID" value="NC_008358.1"/>
</dbReference>
<dbReference type="SMR" id="Q0C0I6"/>
<dbReference type="STRING" id="228405.HNE_2059"/>
<dbReference type="KEGG" id="hne:HNE_2059"/>
<dbReference type="eggNOG" id="COG1327">
    <property type="taxonomic scope" value="Bacteria"/>
</dbReference>
<dbReference type="HOGENOM" id="CLU_108412_0_1_5"/>
<dbReference type="Proteomes" id="UP000001959">
    <property type="component" value="Chromosome"/>
</dbReference>
<dbReference type="GO" id="GO:0005524">
    <property type="term" value="F:ATP binding"/>
    <property type="evidence" value="ECO:0007669"/>
    <property type="project" value="UniProtKB-KW"/>
</dbReference>
<dbReference type="GO" id="GO:0003677">
    <property type="term" value="F:DNA binding"/>
    <property type="evidence" value="ECO:0007669"/>
    <property type="project" value="UniProtKB-KW"/>
</dbReference>
<dbReference type="GO" id="GO:0008270">
    <property type="term" value="F:zinc ion binding"/>
    <property type="evidence" value="ECO:0007669"/>
    <property type="project" value="UniProtKB-UniRule"/>
</dbReference>
<dbReference type="GO" id="GO:0045892">
    <property type="term" value="P:negative regulation of DNA-templated transcription"/>
    <property type="evidence" value="ECO:0007669"/>
    <property type="project" value="UniProtKB-UniRule"/>
</dbReference>
<dbReference type="HAMAP" id="MF_00440">
    <property type="entry name" value="NrdR"/>
    <property type="match status" value="1"/>
</dbReference>
<dbReference type="InterPro" id="IPR005144">
    <property type="entry name" value="ATP-cone_dom"/>
</dbReference>
<dbReference type="InterPro" id="IPR055173">
    <property type="entry name" value="NrdR-like_N"/>
</dbReference>
<dbReference type="InterPro" id="IPR003796">
    <property type="entry name" value="RNR_NrdR-like"/>
</dbReference>
<dbReference type="NCBIfam" id="TIGR00244">
    <property type="entry name" value="transcriptional regulator NrdR"/>
    <property type="match status" value="1"/>
</dbReference>
<dbReference type="PANTHER" id="PTHR30455">
    <property type="entry name" value="TRANSCRIPTIONAL REPRESSOR NRDR"/>
    <property type="match status" value="1"/>
</dbReference>
<dbReference type="PANTHER" id="PTHR30455:SF2">
    <property type="entry name" value="TRANSCRIPTIONAL REPRESSOR NRDR"/>
    <property type="match status" value="1"/>
</dbReference>
<dbReference type="Pfam" id="PF03477">
    <property type="entry name" value="ATP-cone"/>
    <property type="match status" value="1"/>
</dbReference>
<dbReference type="Pfam" id="PF22811">
    <property type="entry name" value="Zn_ribbon_NrdR"/>
    <property type="match status" value="1"/>
</dbReference>
<dbReference type="PROSITE" id="PS51161">
    <property type="entry name" value="ATP_CONE"/>
    <property type="match status" value="1"/>
</dbReference>
<accession>Q0C0I6</accession>
<sequence length="159" mass="18139">MRCPFCGSDNTSVKDSRAAEDDTAVRRRRVCESCGARFTTFERVQLREIIVVKRDGKRSLFDREKLQRSILIALRKRPVDRDRIDQMVSGIVRKLESGGETEVPSSEVGELVMEALKRVDPVGYVRYASVYRDFKDPSDFAQFIEKAALEDEDDDADGK</sequence>
<comment type="function">
    <text evidence="1">Negatively regulates transcription of bacterial ribonucleotide reductase nrd genes and operons by binding to NrdR-boxes.</text>
</comment>
<comment type="cofactor">
    <cofactor evidence="1">
        <name>Zn(2+)</name>
        <dbReference type="ChEBI" id="CHEBI:29105"/>
    </cofactor>
    <text evidence="1">Binds 1 zinc ion.</text>
</comment>
<comment type="similarity">
    <text evidence="1">Belongs to the NrdR family.</text>
</comment>